<gene>
    <name type="primary">ZNF843</name>
</gene>
<keyword id="KW-0479">Metal-binding</keyword>
<keyword id="KW-1185">Reference proteome</keyword>
<keyword id="KW-0677">Repeat</keyword>
<keyword id="KW-0862">Zinc</keyword>
<keyword id="KW-0863">Zinc-finger</keyword>
<comment type="interaction">
    <interactant intactId="EBI-6428016">
        <id>Q8N446</id>
    </interactant>
    <interactant intactId="EBI-295634">
        <id>Q16543</id>
        <label>CDC37</label>
    </interactant>
    <organismsDiffer>false</organismsDiffer>
    <experiments>2</experiments>
</comment>
<comment type="interaction">
    <interactant intactId="EBI-6428016">
        <id>Q8N446</id>
    </interactant>
    <interactant intactId="EBI-3867333">
        <id>A8MQ03</id>
        <label>CYSRT1</label>
    </interactant>
    <organismsDiffer>false</organismsDiffer>
    <experiments>3</experiments>
</comment>
<comment type="interaction">
    <interactant intactId="EBI-6428016">
        <id>Q8N446</id>
    </interactant>
    <interactant intactId="EBI-740785">
        <id>P49639</id>
        <label>HOXA1</label>
    </interactant>
    <organismsDiffer>false</organismsDiffer>
    <experiments>3</experiments>
</comment>
<comment type="interaction">
    <interactant intactId="EBI-6428016">
        <id>Q8N446</id>
    </interactant>
    <interactant intactId="EBI-11962084">
        <id>Q3LI66</id>
        <label>KRTAP6-2</label>
    </interactant>
    <organismsDiffer>false</organismsDiffer>
    <experiments>3</experiments>
</comment>
<dbReference type="EMBL" id="AK291063">
    <property type="protein sequence ID" value="BAF83752.1"/>
    <property type="molecule type" value="mRNA"/>
</dbReference>
<dbReference type="EMBL" id="BC036762">
    <property type="protein sequence ID" value="AAH36762.1"/>
    <property type="molecule type" value="mRNA"/>
</dbReference>
<dbReference type="CCDS" id="CCDS45471.1"/>
<dbReference type="RefSeq" id="NP_001129981.1">
    <property type="nucleotide sequence ID" value="NM_001136509.3"/>
</dbReference>
<dbReference type="RefSeq" id="NP_001340310.1">
    <property type="nucleotide sequence ID" value="NM_001353381.1"/>
</dbReference>
<dbReference type="BioGRID" id="129710">
    <property type="interactions" value="13"/>
</dbReference>
<dbReference type="FunCoup" id="Q8N446">
    <property type="interactions" value="7"/>
</dbReference>
<dbReference type="IntAct" id="Q8N446">
    <property type="interactions" value="15"/>
</dbReference>
<dbReference type="STRING" id="9606.ENSP00000322899"/>
<dbReference type="iPTMnet" id="Q8N446"/>
<dbReference type="PhosphoSitePlus" id="Q8N446"/>
<dbReference type="BioMuta" id="ZNF843"/>
<dbReference type="DMDM" id="74759868"/>
<dbReference type="MassIVE" id="Q8N446"/>
<dbReference type="PaxDb" id="9606-ENSP00000322899"/>
<dbReference type="Antibodypedia" id="7194">
    <property type="antibodies" value="126 antibodies from 18 providers"/>
</dbReference>
<dbReference type="DNASU" id="283933"/>
<dbReference type="Ensembl" id="ENST00000315678.10">
    <property type="protein sequence ID" value="ENSP00000322899.5"/>
    <property type="gene ID" value="ENSG00000176723.10"/>
</dbReference>
<dbReference type="Ensembl" id="ENST00000618063.1">
    <property type="protein sequence ID" value="ENSP00000483573.1"/>
    <property type="gene ID" value="ENSG00000176723.10"/>
</dbReference>
<dbReference type="GeneID" id="283933"/>
<dbReference type="KEGG" id="hsa:283933"/>
<dbReference type="MANE-Select" id="ENST00000315678.10">
    <property type="protein sequence ID" value="ENSP00000322899.5"/>
    <property type="RefSeq nucleotide sequence ID" value="NM_001136509.3"/>
    <property type="RefSeq protein sequence ID" value="NP_001129981.1"/>
</dbReference>
<dbReference type="UCSC" id="uc010vfm.2">
    <property type="organism name" value="human"/>
</dbReference>
<dbReference type="AGR" id="HGNC:28710"/>
<dbReference type="CTD" id="283933"/>
<dbReference type="GeneCards" id="ZNF843"/>
<dbReference type="HGNC" id="HGNC:28710">
    <property type="gene designation" value="ZNF843"/>
</dbReference>
<dbReference type="HPA" id="ENSG00000176723">
    <property type="expression patterns" value="Low tissue specificity"/>
</dbReference>
<dbReference type="neXtProt" id="NX_Q8N446"/>
<dbReference type="OpenTargets" id="ENSG00000176723"/>
<dbReference type="PharmGKB" id="PA162410853"/>
<dbReference type="VEuPathDB" id="HostDB:ENSG00000176723"/>
<dbReference type="eggNOG" id="KOG1721">
    <property type="taxonomic scope" value="Eukaryota"/>
</dbReference>
<dbReference type="GeneTree" id="ENSGT00530000067643"/>
<dbReference type="HOGENOM" id="CLU_796827_0_0_1"/>
<dbReference type="InParanoid" id="Q8N446"/>
<dbReference type="OrthoDB" id="6077919at2759"/>
<dbReference type="PAN-GO" id="Q8N446">
    <property type="GO annotations" value="0 GO annotations based on evolutionary models"/>
</dbReference>
<dbReference type="PhylomeDB" id="Q8N446"/>
<dbReference type="PathwayCommons" id="Q8N446"/>
<dbReference type="SignaLink" id="Q8N446"/>
<dbReference type="BioGRID-ORCS" id="283933">
    <property type="hits" value="9 hits in 1148 CRISPR screens"/>
</dbReference>
<dbReference type="ChiTaRS" id="ZNF843">
    <property type="organism name" value="human"/>
</dbReference>
<dbReference type="GenomeRNAi" id="283933"/>
<dbReference type="Pharos" id="Q8N446">
    <property type="development level" value="Tdark"/>
</dbReference>
<dbReference type="PRO" id="PR:Q8N446"/>
<dbReference type="Proteomes" id="UP000005640">
    <property type="component" value="Chromosome 16"/>
</dbReference>
<dbReference type="RNAct" id="Q8N446">
    <property type="molecule type" value="protein"/>
</dbReference>
<dbReference type="Bgee" id="ENSG00000176723">
    <property type="expression patterns" value="Expressed in secondary oocyte and 125 other cell types or tissues"/>
</dbReference>
<dbReference type="ExpressionAtlas" id="Q8N446">
    <property type="expression patterns" value="baseline and differential"/>
</dbReference>
<dbReference type="GO" id="GO:0008270">
    <property type="term" value="F:zinc ion binding"/>
    <property type="evidence" value="ECO:0007669"/>
    <property type="project" value="UniProtKB-KW"/>
</dbReference>
<dbReference type="FunFam" id="3.30.160.60:FF:000303">
    <property type="entry name" value="Zinc finger protein 41"/>
    <property type="match status" value="1"/>
</dbReference>
<dbReference type="Gene3D" id="3.30.160.60">
    <property type="entry name" value="Classic Zinc Finger"/>
    <property type="match status" value="1"/>
</dbReference>
<dbReference type="InterPro" id="IPR036236">
    <property type="entry name" value="Znf_C2H2_sf"/>
</dbReference>
<dbReference type="InterPro" id="IPR013087">
    <property type="entry name" value="Znf_C2H2_type"/>
</dbReference>
<dbReference type="SUPFAM" id="SSF57667">
    <property type="entry name" value="beta-beta-alpha zinc fingers"/>
    <property type="match status" value="1"/>
</dbReference>
<dbReference type="PROSITE" id="PS00028">
    <property type="entry name" value="ZINC_FINGER_C2H2_1"/>
    <property type="match status" value="1"/>
</dbReference>
<dbReference type="PROSITE" id="PS50157">
    <property type="entry name" value="ZINC_FINGER_C2H2_2"/>
    <property type="match status" value="2"/>
</dbReference>
<proteinExistence type="evidence at protein level"/>
<evidence type="ECO:0000255" key="1">
    <source>
        <dbReference type="PROSITE-ProRule" id="PRU00042"/>
    </source>
</evidence>
<evidence type="ECO:0000256" key="2">
    <source>
        <dbReference type="SAM" id="MobiDB-lite"/>
    </source>
</evidence>
<evidence type="ECO:0000305" key="3"/>
<accession>Q8N446</accession>
<accession>A8K4U8</accession>
<protein>
    <recommendedName>
        <fullName>Zinc finger protein 843</fullName>
    </recommendedName>
</protein>
<sequence>MRSLPFALTVESVSARAPTCCSTGRFTQGRQPCKCKACGRGFTQSASLLQHWRVHSDWRETLSLSPVRQDLLWPLQPHQAPASPLGRSHSSAGVRQGFSGQLCCWLTKEHTLAEALRLSPVPAGFWGPVEADRPPANSHRRVCPFCCCSCGDSVNEKTSLSQRVLPHPGEKTCRGGSVESVSLAPSSVAPDSTSGLRPCGSPGSFLQHLPPSTLLPRPPFLYPGPPLSLQPLVPSGLPAVPAVPLGGLEVAQVPPATQPAAQQEGAMGPRSCASAGRDSREAVQAPGYPEPARKASQHRAAGPLGEARARLQRQCRAPPPPSNPHWRGALPVFPVWKASSRRSNLARH</sequence>
<name>ZN843_HUMAN</name>
<feature type="chain" id="PRO_0000343750" description="Zinc finger protein 843">
    <location>
        <begin position="1"/>
        <end position="348"/>
    </location>
</feature>
<feature type="zinc finger region" description="C2H2-type 1" evidence="1">
    <location>
        <begin position="33"/>
        <end position="55"/>
    </location>
</feature>
<feature type="zinc finger region" description="C2H2-type 2; degenerate" evidence="1">
    <location>
        <begin position="145"/>
        <end position="167"/>
    </location>
</feature>
<feature type="region of interest" description="Disordered" evidence="2">
    <location>
        <begin position="184"/>
        <end position="203"/>
    </location>
</feature>
<feature type="region of interest" description="Disordered" evidence="2">
    <location>
        <begin position="256"/>
        <end position="329"/>
    </location>
</feature>
<feature type="compositionally biased region" description="Polar residues" evidence="2">
    <location>
        <begin position="184"/>
        <end position="195"/>
    </location>
</feature>
<feature type="sequence conflict" description="In Ref. 1; BAF83752." evidence="3" ref="1">
    <original>Q</original>
    <variation>L</variation>
    <location>
        <position position="284"/>
    </location>
</feature>
<organism>
    <name type="scientific">Homo sapiens</name>
    <name type="common">Human</name>
    <dbReference type="NCBI Taxonomy" id="9606"/>
    <lineage>
        <taxon>Eukaryota</taxon>
        <taxon>Metazoa</taxon>
        <taxon>Chordata</taxon>
        <taxon>Craniata</taxon>
        <taxon>Vertebrata</taxon>
        <taxon>Euteleostomi</taxon>
        <taxon>Mammalia</taxon>
        <taxon>Eutheria</taxon>
        <taxon>Euarchontoglires</taxon>
        <taxon>Primates</taxon>
        <taxon>Haplorrhini</taxon>
        <taxon>Catarrhini</taxon>
        <taxon>Hominidae</taxon>
        <taxon>Homo</taxon>
    </lineage>
</organism>
<reference key="1">
    <citation type="journal article" date="2004" name="Nat. Genet.">
        <title>Complete sequencing and characterization of 21,243 full-length human cDNAs.</title>
        <authorList>
            <person name="Ota T."/>
            <person name="Suzuki Y."/>
            <person name="Nishikawa T."/>
            <person name="Otsuki T."/>
            <person name="Sugiyama T."/>
            <person name="Irie R."/>
            <person name="Wakamatsu A."/>
            <person name="Hayashi K."/>
            <person name="Sato H."/>
            <person name="Nagai K."/>
            <person name="Kimura K."/>
            <person name="Makita H."/>
            <person name="Sekine M."/>
            <person name="Obayashi M."/>
            <person name="Nishi T."/>
            <person name="Shibahara T."/>
            <person name="Tanaka T."/>
            <person name="Ishii S."/>
            <person name="Yamamoto J."/>
            <person name="Saito K."/>
            <person name="Kawai Y."/>
            <person name="Isono Y."/>
            <person name="Nakamura Y."/>
            <person name="Nagahari K."/>
            <person name="Murakami K."/>
            <person name="Yasuda T."/>
            <person name="Iwayanagi T."/>
            <person name="Wagatsuma M."/>
            <person name="Shiratori A."/>
            <person name="Sudo H."/>
            <person name="Hosoiri T."/>
            <person name="Kaku Y."/>
            <person name="Kodaira H."/>
            <person name="Kondo H."/>
            <person name="Sugawara M."/>
            <person name="Takahashi M."/>
            <person name="Kanda K."/>
            <person name="Yokoi T."/>
            <person name="Furuya T."/>
            <person name="Kikkawa E."/>
            <person name="Omura Y."/>
            <person name="Abe K."/>
            <person name="Kamihara K."/>
            <person name="Katsuta N."/>
            <person name="Sato K."/>
            <person name="Tanikawa M."/>
            <person name="Yamazaki M."/>
            <person name="Ninomiya K."/>
            <person name="Ishibashi T."/>
            <person name="Yamashita H."/>
            <person name="Murakawa K."/>
            <person name="Fujimori K."/>
            <person name="Tanai H."/>
            <person name="Kimata M."/>
            <person name="Watanabe M."/>
            <person name="Hiraoka S."/>
            <person name="Chiba Y."/>
            <person name="Ishida S."/>
            <person name="Ono Y."/>
            <person name="Takiguchi S."/>
            <person name="Watanabe S."/>
            <person name="Yosida M."/>
            <person name="Hotuta T."/>
            <person name="Kusano J."/>
            <person name="Kanehori K."/>
            <person name="Takahashi-Fujii A."/>
            <person name="Hara H."/>
            <person name="Tanase T.-O."/>
            <person name="Nomura Y."/>
            <person name="Togiya S."/>
            <person name="Komai F."/>
            <person name="Hara R."/>
            <person name="Takeuchi K."/>
            <person name="Arita M."/>
            <person name="Imose N."/>
            <person name="Musashino K."/>
            <person name="Yuuki H."/>
            <person name="Oshima A."/>
            <person name="Sasaki N."/>
            <person name="Aotsuka S."/>
            <person name="Yoshikawa Y."/>
            <person name="Matsunawa H."/>
            <person name="Ichihara T."/>
            <person name="Shiohata N."/>
            <person name="Sano S."/>
            <person name="Moriya S."/>
            <person name="Momiyama H."/>
            <person name="Satoh N."/>
            <person name="Takami S."/>
            <person name="Terashima Y."/>
            <person name="Suzuki O."/>
            <person name="Nakagawa S."/>
            <person name="Senoh A."/>
            <person name="Mizoguchi H."/>
            <person name="Goto Y."/>
            <person name="Shimizu F."/>
            <person name="Wakebe H."/>
            <person name="Hishigaki H."/>
            <person name="Watanabe T."/>
            <person name="Sugiyama A."/>
            <person name="Takemoto M."/>
            <person name="Kawakami B."/>
            <person name="Yamazaki M."/>
            <person name="Watanabe K."/>
            <person name="Kumagai A."/>
            <person name="Itakura S."/>
            <person name="Fukuzumi Y."/>
            <person name="Fujimori Y."/>
            <person name="Komiyama M."/>
            <person name="Tashiro H."/>
            <person name="Tanigami A."/>
            <person name="Fujiwara T."/>
            <person name="Ono T."/>
            <person name="Yamada K."/>
            <person name="Fujii Y."/>
            <person name="Ozaki K."/>
            <person name="Hirao M."/>
            <person name="Ohmori Y."/>
            <person name="Kawabata A."/>
            <person name="Hikiji T."/>
            <person name="Kobatake N."/>
            <person name="Inagaki H."/>
            <person name="Ikema Y."/>
            <person name="Okamoto S."/>
            <person name="Okitani R."/>
            <person name="Kawakami T."/>
            <person name="Noguchi S."/>
            <person name="Itoh T."/>
            <person name="Shigeta K."/>
            <person name="Senba T."/>
            <person name="Matsumura K."/>
            <person name="Nakajima Y."/>
            <person name="Mizuno T."/>
            <person name="Morinaga M."/>
            <person name="Sasaki M."/>
            <person name="Togashi T."/>
            <person name="Oyama M."/>
            <person name="Hata H."/>
            <person name="Watanabe M."/>
            <person name="Komatsu T."/>
            <person name="Mizushima-Sugano J."/>
            <person name="Satoh T."/>
            <person name="Shirai Y."/>
            <person name="Takahashi Y."/>
            <person name="Nakagawa K."/>
            <person name="Okumura K."/>
            <person name="Nagase T."/>
            <person name="Nomura N."/>
            <person name="Kikuchi H."/>
            <person name="Masuho Y."/>
            <person name="Yamashita R."/>
            <person name="Nakai K."/>
            <person name="Yada T."/>
            <person name="Nakamura Y."/>
            <person name="Ohara O."/>
            <person name="Isogai T."/>
            <person name="Sugano S."/>
        </authorList>
    </citation>
    <scope>NUCLEOTIDE SEQUENCE [LARGE SCALE MRNA]</scope>
    <source>
        <tissue>Teratocarcinoma</tissue>
    </source>
</reference>
<reference key="2">
    <citation type="journal article" date="2004" name="Genome Res.">
        <title>The status, quality, and expansion of the NIH full-length cDNA project: the Mammalian Gene Collection (MGC).</title>
        <authorList>
            <consortium name="The MGC Project Team"/>
        </authorList>
    </citation>
    <scope>NUCLEOTIDE SEQUENCE [LARGE SCALE MRNA]</scope>
    <source>
        <tissue>Ovary</tissue>
    </source>
</reference>